<feature type="chain" id="PRO_0000099425" description="Core protein D2">
    <location>
        <begin position="1"/>
        <end position="146"/>
    </location>
</feature>
<sequence>MSINIDIKKITDLLNSSILFPDDVQELLREKYIVLERKSNGTPTVAHIYKTMARFDNKSIYRIAKFLFMNRPDVIKLLFLEDVEPLLPDKSINISINNTEYPQLEGPIGTKIALLELFNAFKTGISEPIPYYYLPLRKDINNIVTK</sequence>
<name>PG114_VAR67</name>
<evidence type="ECO:0000250" key="1">
    <source>
        <dbReference type="UniProtKB" id="P04300"/>
    </source>
</evidence>
<evidence type="ECO:0000305" key="2"/>
<protein>
    <recommendedName>
        <fullName>Core protein D2</fullName>
    </recommendedName>
</protein>
<gene>
    <name type="primary">OPG114</name>
    <name type="ORF">D2L</name>
</gene>
<accession>P0DOS2</accession>
<accession>P33060</accession>
<proteinExistence type="evidence at transcript level"/>
<reference key="1">
    <citation type="journal article" date="1993" name="Virus Res.">
        <title>Nucleotide sequence analysis of variola virus HindIII M, L, I genome fragments.</title>
        <authorList>
            <person name="Shchelkunov S.N."/>
            <person name="Blinov V.M."/>
            <person name="Totmenin A.V."/>
            <person name="Marennikova S.S."/>
            <person name="Kolykhalov A.A."/>
            <person name="Frolov I.V."/>
            <person name="Chizhikov V.E."/>
            <person name="Gytorov V.V."/>
            <person name="Gashikov P.V."/>
            <person name="Belanov E.F."/>
            <person name="Belavin P.A."/>
            <person name="Resenchuk S.M."/>
            <person name="Andzhaparidze O.G."/>
            <person name="Sandakhchiev L.S."/>
        </authorList>
    </citation>
    <scope>NUCLEOTIDE SEQUENCE [GENOMIC DNA]</scope>
</reference>
<reference key="2">
    <citation type="journal article" date="1993" name="FEBS Lett.">
        <title>Genes of variola and vaccinia viruses necessary to overcome the host protective mechanisms.</title>
        <authorList>
            <person name="Shchelkunov S.N."/>
            <person name="Blinov V.M."/>
            <person name="Sandakhchiev L.S."/>
        </authorList>
    </citation>
    <scope>NUCLEOTIDE SEQUENCE [LARGE SCALE GENOMIC DNA]</scope>
</reference>
<organismHost>
    <name type="scientific">Homo sapiens</name>
    <name type="common">Human</name>
    <dbReference type="NCBI Taxonomy" id="9606"/>
</organismHost>
<comment type="function">
    <text evidence="1">Late protein which is part of a large complex required for early virion morphogenesis. This complex participates in the formation of virosomes and the incorporation of virosomal contents into nascent immature virions.</text>
</comment>
<comment type="subunit">
    <text evidence="1">Part of a complex composed of the kinase OPG054, OPG092, OPG100, OPG114, OPG115, OPG142 and OPG157.</text>
</comment>
<comment type="subcellular location">
    <subcellularLocation>
        <location evidence="1">Virion</location>
    </subcellularLocation>
    <text evidence="1">Localizes to the virion core.</text>
</comment>
<comment type="induction">
    <text>Expressed in the late phase of the viral replicative cycle.</text>
</comment>
<comment type="similarity">
    <text evidence="2">Belongs to the orthopoxvirus OPG114 family.</text>
</comment>
<keyword id="KW-0426">Late protein</keyword>
<keyword id="KW-1185">Reference proteome</keyword>
<keyword id="KW-0946">Virion</keyword>
<organism>
    <name type="scientific">Variola virus (isolate Human/India/Ind3/1967)</name>
    <name type="common">VARV</name>
    <name type="synonym">Smallpox virus</name>
    <dbReference type="NCBI Taxonomy" id="587200"/>
    <lineage>
        <taxon>Viruses</taxon>
        <taxon>Varidnaviria</taxon>
        <taxon>Bamfordvirae</taxon>
        <taxon>Nucleocytoviricota</taxon>
        <taxon>Pokkesviricetes</taxon>
        <taxon>Chitovirales</taxon>
        <taxon>Poxviridae</taxon>
        <taxon>Chordopoxvirinae</taxon>
        <taxon>Orthopoxvirus</taxon>
        <taxon>Variola virus</taxon>
    </lineage>
</organism>
<dbReference type="EMBL" id="X67119">
    <property type="protein sequence ID" value="CAA47591.1"/>
    <property type="molecule type" value="Genomic_DNA"/>
</dbReference>
<dbReference type="EMBL" id="X69198">
    <property type="protein sequence ID" value="CAA49034.1"/>
    <property type="molecule type" value="Genomic_DNA"/>
</dbReference>
<dbReference type="PIR" id="S33106">
    <property type="entry name" value="S33106"/>
</dbReference>
<dbReference type="KEGG" id="vg:1486418"/>
<dbReference type="Proteomes" id="UP000002060">
    <property type="component" value="Segment"/>
</dbReference>
<dbReference type="GO" id="GO:0044423">
    <property type="term" value="C:virion component"/>
    <property type="evidence" value="ECO:0007669"/>
    <property type="project" value="UniProtKB-KW"/>
</dbReference>
<dbReference type="InterPro" id="IPR006791">
    <property type="entry name" value="Pox_D2"/>
</dbReference>
<dbReference type="Pfam" id="PF04701">
    <property type="entry name" value="Pox_D2"/>
    <property type="match status" value="1"/>
</dbReference>